<gene>
    <name type="primary">AIM1</name>
    <name type="ordered locus">At4g29010</name>
    <name type="ORF">F19B15.40</name>
</gene>
<feature type="chain" id="PRO_0000401372" description="Peroxisomal fatty acid beta-oxidation multifunctional protein AIM1">
    <location>
        <begin position="1"/>
        <end position="721"/>
    </location>
</feature>
<feature type="short sequence motif" description="Microbody targeting signal" evidence="8">
    <location>
        <begin position="719"/>
        <end position="721"/>
    </location>
</feature>
<feature type="active site" description="Nucleophile" evidence="2">
    <location>
        <position position="116"/>
    </location>
</feature>
<feature type="active site" description="Proton acceptor" evidence="2">
    <location>
        <position position="136"/>
    </location>
</feature>
<sequence length="721" mass="77858">MAKKIGVTMEVGNDGVAVITISNPPVNSLASPIISGLKEKFRDANQRNDVKAIVLIGNNGRFSGGFDINVFQQVHKTGDLSLMPEVSVELVCNLMEDSRKPVVAAVEGLALGGGLELAMACHARVAAPKAQLGLPELTLGVIPGFGGTQRLPRLVGLAKATDMILLSKSISSEEGHKLGLIDALVPPGDVLSTSRKWALDIAEGRKPFLQSLHRTDKIGSLSEARAILKNSRQLAKKIAPNMPQHHACIEVIEEGIIHGGYSGVLKEAEVFKQLVLSDTAKGLVHVFFAQRATSKVPNVTDVGLKPRPIKKVAVIGGGLMGSGIATALLLSNIRVVLKEINSEFLMKGIKSVEANMKSLVSRGKLTQDKAGKALSLFKGVLDYTEFNDVDMVIEAVIENIQLKQNIFKEIEKVCSPHCILASNTSTIDLDVIGEKTNSKDRIVGAHFFSPAHLMPLLEIVRSKNTSAQVILDLMAVGKAIKKVPVVVGNCIGFAVNRTFFPYSQAAHMLANLGVDLFRIDSVITSFGLPLGPFQLGDLAGHGIGLAVGPIYAKVYGDRMFRSPMTELLLKSGRNGKINGRGYYIYEKGSKPKPDPSVLSIVEKSRKLTNIMPGGKPISVTDKEIVEMILFPVVNEACRVLDEGVVIRASDLDIASVLGMSFPSYRGGIVFWADTVGPKYIYERLKKLSETYGSFFKPSRYLEERAMNGMLLSESKSSRSKL</sequence>
<proteinExistence type="evidence at protein level"/>
<organism>
    <name type="scientific">Arabidopsis thaliana</name>
    <name type="common">Mouse-ear cress</name>
    <dbReference type="NCBI Taxonomy" id="3702"/>
    <lineage>
        <taxon>Eukaryota</taxon>
        <taxon>Viridiplantae</taxon>
        <taxon>Streptophyta</taxon>
        <taxon>Embryophyta</taxon>
        <taxon>Tracheophyta</taxon>
        <taxon>Spermatophyta</taxon>
        <taxon>Magnoliopsida</taxon>
        <taxon>eudicotyledons</taxon>
        <taxon>Gunneridae</taxon>
        <taxon>Pentapetalae</taxon>
        <taxon>rosids</taxon>
        <taxon>malvids</taxon>
        <taxon>Brassicales</taxon>
        <taxon>Brassicaceae</taxon>
        <taxon>Camelineae</taxon>
        <taxon>Arabidopsis</taxon>
    </lineage>
</organism>
<keyword id="KW-0276">Fatty acid metabolism</keyword>
<keyword id="KW-0413">Isomerase</keyword>
<keyword id="KW-0443">Lipid metabolism</keyword>
<keyword id="KW-0456">Lyase</keyword>
<keyword id="KW-0511">Multifunctional enzyme</keyword>
<keyword id="KW-0520">NAD</keyword>
<keyword id="KW-0560">Oxidoreductase</keyword>
<keyword id="KW-0576">Peroxisome</keyword>
<keyword id="KW-1185">Reference proteome</keyword>
<reference key="1">
    <citation type="journal article" date="1999" name="Plant Cell">
        <title>A defect in beta-oxidation causes abnormal inflorescence development in Arabidopsis.</title>
        <authorList>
            <person name="Richmond T.A."/>
            <person name="Bleecker A.B."/>
        </authorList>
    </citation>
    <scope>NUCLEOTIDE SEQUENCE [MRNA]</scope>
    <scope>FUNCTION</scope>
    <scope>CATALYTIC ACTIVITY</scope>
    <scope>BIOPHYSICOCHEMICAL PROPERTIES</scope>
    <scope>TISSUE SPECIFICITY</scope>
    <scope>DISRUPTION PHENOTYPE</scope>
</reference>
<reference key="2">
    <citation type="journal article" date="1999" name="Nature">
        <title>Sequence and analysis of chromosome 4 of the plant Arabidopsis thaliana.</title>
        <authorList>
            <person name="Mayer K.F.X."/>
            <person name="Schueller C."/>
            <person name="Wambutt R."/>
            <person name="Murphy G."/>
            <person name="Volckaert G."/>
            <person name="Pohl T."/>
            <person name="Duesterhoeft A."/>
            <person name="Stiekema W."/>
            <person name="Entian K.-D."/>
            <person name="Terryn N."/>
            <person name="Harris B."/>
            <person name="Ansorge W."/>
            <person name="Brandt P."/>
            <person name="Grivell L.A."/>
            <person name="Rieger M."/>
            <person name="Weichselgartner M."/>
            <person name="de Simone V."/>
            <person name="Obermaier B."/>
            <person name="Mache R."/>
            <person name="Mueller M."/>
            <person name="Kreis M."/>
            <person name="Delseny M."/>
            <person name="Puigdomenech P."/>
            <person name="Watson M."/>
            <person name="Schmidtheini T."/>
            <person name="Reichert B."/>
            <person name="Portetelle D."/>
            <person name="Perez-Alonso M."/>
            <person name="Boutry M."/>
            <person name="Bancroft I."/>
            <person name="Vos P."/>
            <person name="Hoheisel J."/>
            <person name="Zimmermann W."/>
            <person name="Wedler H."/>
            <person name="Ridley P."/>
            <person name="Langham S.-A."/>
            <person name="McCullagh B."/>
            <person name="Bilham L."/>
            <person name="Robben J."/>
            <person name="van der Schueren J."/>
            <person name="Grymonprez B."/>
            <person name="Chuang Y.-J."/>
            <person name="Vandenbussche F."/>
            <person name="Braeken M."/>
            <person name="Weltjens I."/>
            <person name="Voet M."/>
            <person name="Bastiaens I."/>
            <person name="Aert R."/>
            <person name="Defoor E."/>
            <person name="Weitzenegger T."/>
            <person name="Bothe G."/>
            <person name="Ramsperger U."/>
            <person name="Hilbert H."/>
            <person name="Braun M."/>
            <person name="Holzer E."/>
            <person name="Brandt A."/>
            <person name="Peters S."/>
            <person name="van Staveren M."/>
            <person name="Dirkse W."/>
            <person name="Mooijman P."/>
            <person name="Klein Lankhorst R."/>
            <person name="Rose M."/>
            <person name="Hauf J."/>
            <person name="Koetter P."/>
            <person name="Berneiser S."/>
            <person name="Hempel S."/>
            <person name="Feldpausch M."/>
            <person name="Lamberth S."/>
            <person name="Van den Daele H."/>
            <person name="De Keyser A."/>
            <person name="Buysshaert C."/>
            <person name="Gielen J."/>
            <person name="Villarroel R."/>
            <person name="De Clercq R."/>
            <person name="van Montagu M."/>
            <person name="Rogers J."/>
            <person name="Cronin A."/>
            <person name="Quail M.A."/>
            <person name="Bray-Allen S."/>
            <person name="Clark L."/>
            <person name="Doggett J."/>
            <person name="Hall S."/>
            <person name="Kay M."/>
            <person name="Lennard N."/>
            <person name="McLay K."/>
            <person name="Mayes R."/>
            <person name="Pettett A."/>
            <person name="Rajandream M.A."/>
            <person name="Lyne M."/>
            <person name="Benes V."/>
            <person name="Rechmann S."/>
            <person name="Borkova D."/>
            <person name="Bloecker H."/>
            <person name="Scharfe M."/>
            <person name="Grimm M."/>
            <person name="Loehnert T.-H."/>
            <person name="Dose S."/>
            <person name="de Haan M."/>
            <person name="Maarse A.C."/>
            <person name="Schaefer M."/>
            <person name="Mueller-Auer S."/>
            <person name="Gabel C."/>
            <person name="Fuchs M."/>
            <person name="Fartmann B."/>
            <person name="Granderath K."/>
            <person name="Dauner D."/>
            <person name="Herzl A."/>
            <person name="Neumann S."/>
            <person name="Argiriou A."/>
            <person name="Vitale D."/>
            <person name="Liguori R."/>
            <person name="Piravandi E."/>
            <person name="Massenet O."/>
            <person name="Quigley F."/>
            <person name="Clabauld G."/>
            <person name="Muendlein A."/>
            <person name="Felber R."/>
            <person name="Schnabl S."/>
            <person name="Hiller R."/>
            <person name="Schmidt W."/>
            <person name="Lecharny A."/>
            <person name="Aubourg S."/>
            <person name="Chefdor F."/>
            <person name="Cooke R."/>
            <person name="Berger C."/>
            <person name="Monfort A."/>
            <person name="Casacuberta E."/>
            <person name="Gibbons T."/>
            <person name="Weber N."/>
            <person name="Vandenbol M."/>
            <person name="Bargues M."/>
            <person name="Terol J."/>
            <person name="Torres A."/>
            <person name="Perez-Perez A."/>
            <person name="Purnelle B."/>
            <person name="Bent E."/>
            <person name="Johnson S."/>
            <person name="Tacon D."/>
            <person name="Jesse T."/>
            <person name="Heijnen L."/>
            <person name="Schwarz S."/>
            <person name="Scholler P."/>
            <person name="Heber S."/>
            <person name="Francs P."/>
            <person name="Bielke C."/>
            <person name="Frishman D."/>
            <person name="Haase D."/>
            <person name="Lemcke K."/>
            <person name="Mewes H.-W."/>
            <person name="Stocker S."/>
            <person name="Zaccaria P."/>
            <person name="Bevan M."/>
            <person name="Wilson R.K."/>
            <person name="de la Bastide M."/>
            <person name="Habermann K."/>
            <person name="Parnell L."/>
            <person name="Dedhia N."/>
            <person name="Gnoj L."/>
            <person name="Schutz K."/>
            <person name="Huang E."/>
            <person name="Spiegel L."/>
            <person name="Sekhon M."/>
            <person name="Murray J."/>
            <person name="Sheet P."/>
            <person name="Cordes M."/>
            <person name="Abu-Threideh J."/>
            <person name="Stoneking T."/>
            <person name="Kalicki J."/>
            <person name="Graves T."/>
            <person name="Harmon G."/>
            <person name="Edwards J."/>
            <person name="Latreille P."/>
            <person name="Courtney L."/>
            <person name="Cloud J."/>
            <person name="Abbott A."/>
            <person name="Scott K."/>
            <person name="Johnson D."/>
            <person name="Minx P."/>
            <person name="Bentley D."/>
            <person name="Fulton B."/>
            <person name="Miller N."/>
            <person name="Greco T."/>
            <person name="Kemp K."/>
            <person name="Kramer J."/>
            <person name="Fulton L."/>
            <person name="Mardis E."/>
            <person name="Dante M."/>
            <person name="Pepin K."/>
            <person name="Hillier L.W."/>
            <person name="Nelson J."/>
            <person name="Spieth J."/>
            <person name="Ryan E."/>
            <person name="Andrews S."/>
            <person name="Geisel C."/>
            <person name="Layman D."/>
            <person name="Du H."/>
            <person name="Ali J."/>
            <person name="Berghoff A."/>
            <person name="Jones K."/>
            <person name="Drone K."/>
            <person name="Cotton M."/>
            <person name="Joshu C."/>
            <person name="Antonoiu B."/>
            <person name="Zidanic M."/>
            <person name="Strong C."/>
            <person name="Sun H."/>
            <person name="Lamar B."/>
            <person name="Yordan C."/>
            <person name="Ma P."/>
            <person name="Zhong J."/>
            <person name="Preston R."/>
            <person name="Vil D."/>
            <person name="Shekher M."/>
            <person name="Matero A."/>
            <person name="Shah R."/>
            <person name="Swaby I.K."/>
            <person name="O'Shaughnessy A."/>
            <person name="Rodriguez M."/>
            <person name="Hoffman J."/>
            <person name="Till S."/>
            <person name="Granat S."/>
            <person name="Shohdy N."/>
            <person name="Hasegawa A."/>
            <person name="Hameed A."/>
            <person name="Lodhi M."/>
            <person name="Johnson A."/>
            <person name="Chen E."/>
            <person name="Marra M.A."/>
            <person name="Martienssen R."/>
            <person name="McCombie W.R."/>
        </authorList>
    </citation>
    <scope>NUCLEOTIDE SEQUENCE [LARGE SCALE GENOMIC DNA]</scope>
    <source>
        <strain>cv. Columbia</strain>
    </source>
</reference>
<reference key="3">
    <citation type="journal article" date="2017" name="Plant J.">
        <title>Araport11: a complete reannotation of the Arabidopsis thaliana reference genome.</title>
        <authorList>
            <person name="Cheng C.Y."/>
            <person name="Krishnakumar V."/>
            <person name="Chan A.P."/>
            <person name="Thibaud-Nissen F."/>
            <person name="Schobel S."/>
            <person name="Town C.D."/>
        </authorList>
    </citation>
    <scope>GENOME REANNOTATION</scope>
    <source>
        <strain>cv. Columbia</strain>
    </source>
</reference>
<reference key="4">
    <citation type="journal article" date="2003" name="Science">
        <title>Empirical analysis of transcriptional activity in the Arabidopsis genome.</title>
        <authorList>
            <person name="Yamada K."/>
            <person name="Lim J."/>
            <person name="Dale J.M."/>
            <person name="Chen H."/>
            <person name="Shinn P."/>
            <person name="Palm C.J."/>
            <person name="Southwick A.M."/>
            <person name="Wu H.C."/>
            <person name="Kim C.J."/>
            <person name="Nguyen M."/>
            <person name="Pham P.K."/>
            <person name="Cheuk R.F."/>
            <person name="Karlin-Newmann G."/>
            <person name="Liu S.X."/>
            <person name="Lam B."/>
            <person name="Sakano H."/>
            <person name="Wu T."/>
            <person name="Yu G."/>
            <person name="Miranda M."/>
            <person name="Quach H.L."/>
            <person name="Tripp M."/>
            <person name="Chang C.H."/>
            <person name="Lee J.M."/>
            <person name="Toriumi M.J."/>
            <person name="Chan M.M."/>
            <person name="Tang C.C."/>
            <person name="Onodera C.S."/>
            <person name="Deng J.M."/>
            <person name="Akiyama K."/>
            <person name="Ansari Y."/>
            <person name="Arakawa T."/>
            <person name="Banh J."/>
            <person name="Banno F."/>
            <person name="Bowser L."/>
            <person name="Brooks S.Y."/>
            <person name="Carninci P."/>
            <person name="Chao Q."/>
            <person name="Choy N."/>
            <person name="Enju A."/>
            <person name="Goldsmith A.D."/>
            <person name="Gurjal M."/>
            <person name="Hansen N.F."/>
            <person name="Hayashizaki Y."/>
            <person name="Johnson-Hopson C."/>
            <person name="Hsuan V.W."/>
            <person name="Iida K."/>
            <person name="Karnes M."/>
            <person name="Khan S."/>
            <person name="Koesema E."/>
            <person name="Ishida J."/>
            <person name="Jiang P.X."/>
            <person name="Jones T."/>
            <person name="Kawai J."/>
            <person name="Kamiya A."/>
            <person name="Meyers C."/>
            <person name="Nakajima M."/>
            <person name="Narusaka M."/>
            <person name="Seki M."/>
            <person name="Sakurai T."/>
            <person name="Satou M."/>
            <person name="Tamse R."/>
            <person name="Vaysberg M."/>
            <person name="Wallender E.K."/>
            <person name="Wong C."/>
            <person name="Yamamura Y."/>
            <person name="Yuan S."/>
            <person name="Shinozaki K."/>
            <person name="Davis R.W."/>
            <person name="Theologis A."/>
            <person name="Ecker J.R."/>
        </authorList>
    </citation>
    <scope>NUCLEOTIDE SEQUENCE [LARGE SCALE MRNA]</scope>
    <source>
        <strain>cv. Columbia</strain>
    </source>
</reference>
<reference key="5">
    <citation type="journal article" date="2007" name="Phytochemistry">
        <title>Jasmonate biosynthesis in Arabidopsis thaliana requires peroxisomal beta-oxidation enzymes--additional proof by properties of pex6 and aim1.</title>
        <authorList>
            <person name="Delker C."/>
            <person name="Zolman B.K."/>
            <person name="Miersch O."/>
            <person name="Wasternack C."/>
        </authorList>
    </citation>
    <scope>FUNCTION</scope>
</reference>
<reference key="6">
    <citation type="journal article" date="2007" name="Plant Cell">
        <title>Proteome analysis of Arabidopsis leaf peroxisomes reveals novel targeting peptides, metabolic pathways, and defense mechanisms.</title>
        <authorList>
            <person name="Reumann S."/>
            <person name="Babujee L."/>
            <person name="Ma C."/>
            <person name="Wienkoop S."/>
            <person name="Siemsen T."/>
            <person name="Antonicelli G.E."/>
            <person name="Rasche N."/>
            <person name="Lueder F."/>
            <person name="Weckwerth W."/>
            <person name="Jahn O."/>
        </authorList>
    </citation>
    <scope>IDENTIFICATION BY MASS SPECTROMETRY</scope>
</reference>
<reference key="7">
    <citation type="journal article" date="2010" name="J. Biol. Chem.">
        <title>The multifunctional protein in peroxisomal beta-oxidation: structure and substrate specificity of the Arabidopsis thaliana protein MFP2.</title>
        <authorList>
            <person name="Arent S."/>
            <person name="Christensen C.E."/>
            <person name="Pye V.E."/>
            <person name="Noergaard A."/>
            <person name="Henriksen A."/>
        </authorList>
    </citation>
    <scope>FUNCTION</scope>
    <scope>CATALYTIC ACTIVITY</scope>
</reference>
<reference key="8">
    <citation type="journal article" date="2014" name="Plant Physiol.">
        <title>Peroxisomal ATP-binding cassette transporter COMATOSE and the multifunctional protein abnormal INFLORESCENCE MERISTEM are required for the production of benzoylated metabolites in Arabidopsis seeds.</title>
        <authorList>
            <person name="Bussell J.D."/>
            <person name="Reichelt M."/>
            <person name="Wiszniewski A.A."/>
            <person name="Gershenzon J."/>
            <person name="Smith S.M."/>
        </authorList>
    </citation>
    <scope>FUNCTION</scope>
</reference>
<name>AIM1_ARATH</name>
<protein>
    <recommendedName>
        <fullName evidence="8">Peroxisomal fatty acid beta-oxidation multifunctional protein AIM1</fullName>
    </recommendedName>
    <alternativeName>
        <fullName evidence="7">Protein ABNORMAL INFLORESCENCE MERISTEM 1</fullName>
        <shortName evidence="7">AtAIM1</shortName>
    </alternativeName>
    <domain>
        <recommendedName>
            <fullName>Enoyl-CoA hydratase/3-2-trans-enoyl-CoA isomerase/3-hydroxybutyryl-CoA epimerase</fullName>
            <ecNumber evidence="3 5">4.2.1.17</ecNumber>
            <ecNumber evidence="8">5.1.2.3</ecNumber>
            <ecNumber evidence="8">5.3.3.8</ecNumber>
        </recommendedName>
    </domain>
    <domain>
        <recommendedName>
            <fullName>3-hydroxyacyl-CoA dehydrogenase</fullName>
            <ecNumber evidence="5">1.1.1.35</ecNumber>
        </recommendedName>
    </domain>
</protein>
<dbReference type="EC" id="4.2.1.17" evidence="3 5"/>
<dbReference type="EC" id="5.1.2.3" evidence="8"/>
<dbReference type="EC" id="5.3.3.8" evidence="8"/>
<dbReference type="EC" id="1.1.1.35" evidence="5"/>
<dbReference type="EMBL" id="AF123253">
    <property type="protein sequence ID" value="AAD18041.1"/>
    <property type="molecule type" value="Genomic_DNA"/>
</dbReference>
<dbReference type="EMBL" id="AL078470">
    <property type="protein sequence ID" value="CAB43915.1"/>
    <property type="molecule type" value="Genomic_DNA"/>
</dbReference>
<dbReference type="EMBL" id="AL161574">
    <property type="protein sequence ID" value="CAB79659.1"/>
    <property type="molecule type" value="Genomic_DNA"/>
</dbReference>
<dbReference type="EMBL" id="CP002687">
    <property type="protein sequence ID" value="AEE85572.1"/>
    <property type="molecule type" value="Genomic_DNA"/>
</dbReference>
<dbReference type="EMBL" id="AY059815">
    <property type="protein sequence ID" value="AAL24297.1"/>
    <property type="molecule type" value="mRNA"/>
</dbReference>
<dbReference type="EMBL" id="AY072072">
    <property type="protein sequence ID" value="AAL59895.1"/>
    <property type="molecule type" value="mRNA"/>
</dbReference>
<dbReference type="EMBL" id="AY096659">
    <property type="protein sequence ID" value="AAM20293.1"/>
    <property type="molecule type" value="mRNA"/>
</dbReference>
<dbReference type="PIR" id="T08956">
    <property type="entry name" value="T08956"/>
</dbReference>
<dbReference type="RefSeq" id="NP_194630.1">
    <property type="nucleotide sequence ID" value="NM_119045.5"/>
</dbReference>
<dbReference type="SMR" id="Q9ZPI6"/>
<dbReference type="BioGRID" id="14309">
    <property type="interactions" value="8"/>
</dbReference>
<dbReference type="FunCoup" id="Q9ZPI6">
    <property type="interactions" value="2624"/>
</dbReference>
<dbReference type="STRING" id="3702.Q9ZPI6"/>
<dbReference type="SwissLipids" id="SLP:000000866"/>
<dbReference type="iPTMnet" id="Q9ZPI6"/>
<dbReference type="MetOSite" id="Q9ZPI6"/>
<dbReference type="PaxDb" id="3702-AT4G29010.1"/>
<dbReference type="ProteomicsDB" id="244919"/>
<dbReference type="EnsemblPlants" id="AT4G29010.1">
    <property type="protein sequence ID" value="AT4G29010.1"/>
    <property type="gene ID" value="AT4G29010"/>
</dbReference>
<dbReference type="GeneID" id="829022"/>
<dbReference type="Gramene" id="AT4G29010.1">
    <property type="protein sequence ID" value="AT4G29010.1"/>
    <property type="gene ID" value="AT4G29010"/>
</dbReference>
<dbReference type="KEGG" id="ath:AT4G29010"/>
<dbReference type="Araport" id="AT4G29010"/>
<dbReference type="TAIR" id="AT4G29010">
    <property type="gene designation" value="AIM1"/>
</dbReference>
<dbReference type="eggNOG" id="KOG1683">
    <property type="taxonomic scope" value="Eukaryota"/>
</dbReference>
<dbReference type="HOGENOM" id="CLU_009834_16_3_1"/>
<dbReference type="InParanoid" id="Q9ZPI6"/>
<dbReference type="OMA" id="DPLFWKP"/>
<dbReference type="PhylomeDB" id="Q9ZPI6"/>
<dbReference type="BioCyc" id="MetaCyc:AT4G29010-MONOMER"/>
<dbReference type="SABIO-RK" id="Q9ZPI6"/>
<dbReference type="UniPathway" id="UPA00659"/>
<dbReference type="CD-CODE" id="4299E36E">
    <property type="entry name" value="Nucleolus"/>
</dbReference>
<dbReference type="PRO" id="PR:Q9ZPI6"/>
<dbReference type="Proteomes" id="UP000006548">
    <property type="component" value="Chromosome 4"/>
</dbReference>
<dbReference type="ExpressionAtlas" id="Q9ZPI6">
    <property type="expression patterns" value="baseline and differential"/>
</dbReference>
<dbReference type="GO" id="GO:0005777">
    <property type="term" value="C:peroxisome"/>
    <property type="evidence" value="ECO:0000314"/>
    <property type="project" value="TAIR"/>
</dbReference>
<dbReference type="GO" id="GO:0009505">
    <property type="term" value="C:plant-type cell wall"/>
    <property type="evidence" value="ECO:0007005"/>
    <property type="project" value="TAIR"/>
</dbReference>
<dbReference type="GO" id="GO:0005886">
    <property type="term" value="C:plasma membrane"/>
    <property type="evidence" value="ECO:0007005"/>
    <property type="project" value="TAIR"/>
</dbReference>
<dbReference type="GO" id="GO:0009506">
    <property type="term" value="C:plasmodesma"/>
    <property type="evidence" value="ECO:0007005"/>
    <property type="project" value="TAIR"/>
</dbReference>
<dbReference type="GO" id="GO:0003857">
    <property type="term" value="F:3-hydroxyacyl-CoA dehydrogenase activity"/>
    <property type="evidence" value="ECO:0000314"/>
    <property type="project" value="UniProtKB"/>
</dbReference>
<dbReference type="GO" id="GO:0008692">
    <property type="term" value="F:3-hydroxybutyryl-CoA epimerase activity"/>
    <property type="evidence" value="ECO:0007669"/>
    <property type="project" value="UniProtKB-EC"/>
</dbReference>
<dbReference type="GO" id="GO:0004165">
    <property type="term" value="F:delta(3)-delta(2)-enoyl-CoA isomerase activity"/>
    <property type="evidence" value="ECO:0007669"/>
    <property type="project" value="UniProtKB-EC"/>
</dbReference>
<dbReference type="GO" id="GO:0004300">
    <property type="term" value="F:enoyl-CoA hydratase activity"/>
    <property type="evidence" value="ECO:0000314"/>
    <property type="project" value="UniProtKB"/>
</dbReference>
<dbReference type="GO" id="GO:0070403">
    <property type="term" value="F:NAD+ binding"/>
    <property type="evidence" value="ECO:0007669"/>
    <property type="project" value="InterPro"/>
</dbReference>
<dbReference type="GO" id="GO:0006635">
    <property type="term" value="P:fatty acid beta-oxidation"/>
    <property type="evidence" value="ECO:0000250"/>
    <property type="project" value="TAIR"/>
</dbReference>
<dbReference type="GO" id="GO:0009908">
    <property type="term" value="P:flower development"/>
    <property type="evidence" value="ECO:0000315"/>
    <property type="project" value="TAIR"/>
</dbReference>
<dbReference type="GO" id="GO:0009695">
    <property type="term" value="P:jasmonic acid biosynthetic process"/>
    <property type="evidence" value="ECO:0000315"/>
    <property type="project" value="UniProtKB"/>
</dbReference>
<dbReference type="CDD" id="cd06558">
    <property type="entry name" value="crotonase-like"/>
    <property type="match status" value="1"/>
</dbReference>
<dbReference type="FunFam" id="3.40.50.720:FF:000009">
    <property type="entry name" value="Fatty oxidation complex, alpha subunit"/>
    <property type="match status" value="1"/>
</dbReference>
<dbReference type="FunFam" id="1.10.1040.50:FF:000004">
    <property type="entry name" value="Peroxisomal fatty acid beta-oxidation multifunctional protein"/>
    <property type="match status" value="1"/>
</dbReference>
<dbReference type="FunFam" id="3.90.226.10:FF:000025">
    <property type="entry name" value="Peroxisomal fatty acid beta-oxidation multifunctional protein"/>
    <property type="match status" value="1"/>
</dbReference>
<dbReference type="Gene3D" id="1.10.1040.50">
    <property type="match status" value="1"/>
</dbReference>
<dbReference type="Gene3D" id="3.90.226.10">
    <property type="entry name" value="2-enoyl-CoA Hydratase, Chain A, domain 1"/>
    <property type="match status" value="1"/>
</dbReference>
<dbReference type="Gene3D" id="3.40.50.720">
    <property type="entry name" value="NAD(P)-binding Rossmann-like Domain"/>
    <property type="match status" value="1"/>
</dbReference>
<dbReference type="InterPro" id="IPR006180">
    <property type="entry name" value="3-OHacyl-CoA_DH_CS"/>
</dbReference>
<dbReference type="InterPro" id="IPR006176">
    <property type="entry name" value="3-OHacyl-CoA_DH_NAD-bd"/>
</dbReference>
<dbReference type="InterPro" id="IPR006108">
    <property type="entry name" value="3HC_DH_C"/>
</dbReference>
<dbReference type="InterPro" id="IPR008927">
    <property type="entry name" value="6-PGluconate_DH-like_C_sf"/>
</dbReference>
<dbReference type="InterPro" id="IPR029045">
    <property type="entry name" value="ClpP/crotonase-like_dom_sf"/>
</dbReference>
<dbReference type="InterPro" id="IPR018376">
    <property type="entry name" value="Enoyl-CoA_hyd/isom_CS"/>
</dbReference>
<dbReference type="InterPro" id="IPR001753">
    <property type="entry name" value="Enoyl-CoA_hydra/iso"/>
</dbReference>
<dbReference type="InterPro" id="IPR036291">
    <property type="entry name" value="NAD(P)-bd_dom_sf"/>
</dbReference>
<dbReference type="PANTHER" id="PTHR23309">
    <property type="entry name" value="3-HYDROXYACYL-COA DEHYROGENASE"/>
    <property type="match status" value="1"/>
</dbReference>
<dbReference type="PANTHER" id="PTHR23309:SF53">
    <property type="entry name" value="PEROXISOMAL FATTY ACID BETA-OXIDATION MULTIFUNCTIONAL PROTEIN AIM1"/>
    <property type="match status" value="1"/>
</dbReference>
<dbReference type="Pfam" id="PF00725">
    <property type="entry name" value="3HCDH"/>
    <property type="match status" value="1"/>
</dbReference>
<dbReference type="Pfam" id="PF02737">
    <property type="entry name" value="3HCDH_N"/>
    <property type="match status" value="1"/>
</dbReference>
<dbReference type="Pfam" id="PF00378">
    <property type="entry name" value="ECH_1"/>
    <property type="match status" value="1"/>
</dbReference>
<dbReference type="SUPFAM" id="SSF48179">
    <property type="entry name" value="6-phosphogluconate dehydrogenase C-terminal domain-like"/>
    <property type="match status" value="2"/>
</dbReference>
<dbReference type="SUPFAM" id="SSF52096">
    <property type="entry name" value="ClpP/crotonase"/>
    <property type="match status" value="1"/>
</dbReference>
<dbReference type="SUPFAM" id="SSF51735">
    <property type="entry name" value="NAD(P)-binding Rossmann-fold domains"/>
    <property type="match status" value="1"/>
</dbReference>
<dbReference type="PROSITE" id="PS00067">
    <property type="entry name" value="3HCDH"/>
    <property type="match status" value="1"/>
</dbReference>
<dbReference type="PROSITE" id="PS00166">
    <property type="entry name" value="ENOYL_COA_HYDRATASE"/>
    <property type="match status" value="1"/>
</dbReference>
<accession>Q9ZPI6</accession>
<evidence type="ECO:0000250" key="1"/>
<evidence type="ECO:0000255" key="2"/>
<evidence type="ECO:0000269" key="3">
    <source>
    </source>
</evidence>
<evidence type="ECO:0000269" key="4">
    <source>
    </source>
</evidence>
<evidence type="ECO:0000269" key="5">
    <source>
    </source>
</evidence>
<evidence type="ECO:0000269" key="6">
    <source>
    </source>
</evidence>
<evidence type="ECO:0000303" key="7">
    <source>
    </source>
</evidence>
<evidence type="ECO:0000305" key="8"/>
<comment type="function">
    <text evidence="3 4 5 6">Involved in peroxisomal fatty acid beta-oxidation. Required for wound-induced jasmonate biosynthesis. Possesses enoyl-CoA hydratase activity against short chain substrates (C4-C6) and 3-hydroxyacyl-CoA dehydrogenase activity against chains of variable sizes (C6-C16) (PubMed:10521521, PubMed:17544464, PubMed:20463021). Possesses cinnamoyl-CoA hydratase activity and is involved in the peroxisomal beta-oxidation pathway for the biosynthesis of benzoic acid (BA). Required for the accumulation in seeds of benzoylated glucosinolates (BGs) and substituted hydroxybenzoylated choline esters, which are BA-containing secondary metabolites. Required for salicylic acid (SA) in seeds (PubMed:24254312).</text>
</comment>
<comment type="catalytic activity">
    <reaction evidence="3 5">
        <text>a (3S)-3-hydroxyacyl-CoA = a (2E)-enoyl-CoA + H2O</text>
        <dbReference type="Rhea" id="RHEA:16105"/>
        <dbReference type="ChEBI" id="CHEBI:15377"/>
        <dbReference type="ChEBI" id="CHEBI:57318"/>
        <dbReference type="ChEBI" id="CHEBI:58856"/>
        <dbReference type="EC" id="4.2.1.17"/>
    </reaction>
</comment>
<comment type="catalytic activity">
    <reaction evidence="3 5">
        <text>a 4-saturated-(3S)-3-hydroxyacyl-CoA = a (3E)-enoyl-CoA + H2O</text>
        <dbReference type="Rhea" id="RHEA:20724"/>
        <dbReference type="ChEBI" id="CHEBI:15377"/>
        <dbReference type="ChEBI" id="CHEBI:58521"/>
        <dbReference type="ChEBI" id="CHEBI:137480"/>
        <dbReference type="EC" id="4.2.1.17"/>
    </reaction>
</comment>
<comment type="catalytic activity">
    <reaction evidence="5">
        <text>(3S)-3-hydroxybutanoyl-CoA = (2E)-butenoyl-CoA + H2O</text>
        <dbReference type="Rhea" id="RHEA:26558"/>
        <dbReference type="ChEBI" id="CHEBI:15377"/>
        <dbReference type="ChEBI" id="CHEBI:57316"/>
        <dbReference type="ChEBI" id="CHEBI:57332"/>
    </reaction>
    <physiologicalReaction direction="right-to-left" evidence="5">
        <dbReference type="Rhea" id="RHEA:26560"/>
    </physiologicalReaction>
</comment>
<comment type="catalytic activity">
    <reaction evidence="5">
        <text>(3S)-hydroxyoctanoyl-CoA = (2E)-octenoyl-CoA + H2O</text>
        <dbReference type="Rhea" id="RHEA:31199"/>
        <dbReference type="ChEBI" id="CHEBI:15377"/>
        <dbReference type="ChEBI" id="CHEBI:62242"/>
        <dbReference type="ChEBI" id="CHEBI:62617"/>
    </reaction>
    <physiologicalReaction direction="right-to-left" evidence="5">
        <dbReference type="Rhea" id="RHEA:31201"/>
    </physiologicalReaction>
</comment>
<comment type="catalytic activity">
    <reaction evidence="5">
        <text>(3S)-3-hydroxydodecanoyl-CoA = (2E)-dodecenoyl-CoA + H2O</text>
        <dbReference type="Rhea" id="RHEA:31075"/>
        <dbReference type="ChEBI" id="CHEBI:15377"/>
        <dbReference type="ChEBI" id="CHEBI:57330"/>
        <dbReference type="ChEBI" id="CHEBI:62558"/>
    </reaction>
    <physiologicalReaction direction="right-to-left" evidence="5">
        <dbReference type="Rhea" id="RHEA:31077"/>
    </physiologicalReaction>
</comment>
<comment type="catalytic activity">
    <reaction evidence="5">
        <text>(3S)-hydroxytetradecanoyl-CoA = (2E)-tetradecenoyl-CoA + H2O</text>
        <dbReference type="Rhea" id="RHEA:31171"/>
        <dbReference type="ChEBI" id="CHEBI:15377"/>
        <dbReference type="ChEBI" id="CHEBI:61405"/>
        <dbReference type="ChEBI" id="CHEBI:62614"/>
    </reaction>
    <physiologicalReaction direction="right-to-left" evidence="5">
        <dbReference type="Rhea" id="RHEA:31173"/>
    </physiologicalReaction>
</comment>
<comment type="catalytic activity">
    <reaction evidence="5">
        <text>(3S)-hydroxyhexanoyl-CoA = (2E)-hexenoyl-CoA + H2O</text>
        <dbReference type="Rhea" id="RHEA:30547"/>
        <dbReference type="ChEBI" id="CHEBI:15377"/>
        <dbReference type="ChEBI" id="CHEBI:62075"/>
        <dbReference type="ChEBI" id="CHEBI:62077"/>
    </reaction>
    <physiologicalReaction direction="right-to-left" evidence="5">
        <dbReference type="Rhea" id="RHEA:30549"/>
    </physiologicalReaction>
</comment>
<comment type="catalytic activity">
    <reaction evidence="8">
        <text>a (3Z)-enoyl-CoA = a 4-saturated (2E)-enoyl-CoA</text>
        <dbReference type="Rhea" id="RHEA:45900"/>
        <dbReference type="ChEBI" id="CHEBI:85097"/>
        <dbReference type="ChEBI" id="CHEBI:85489"/>
        <dbReference type="EC" id="5.3.3.8"/>
    </reaction>
</comment>
<comment type="catalytic activity">
    <reaction evidence="8">
        <text>a (3E)-enoyl-CoA = a 4-saturated (2E)-enoyl-CoA</text>
        <dbReference type="Rhea" id="RHEA:45228"/>
        <dbReference type="ChEBI" id="CHEBI:58521"/>
        <dbReference type="ChEBI" id="CHEBI:85097"/>
        <dbReference type="EC" id="5.3.3.8"/>
    </reaction>
</comment>
<comment type="catalytic activity">
    <reaction evidence="8">
        <text>(3S)-3-hydroxybutanoyl-CoA = (3R)-3-hydroxybutanoyl-CoA</text>
        <dbReference type="Rhea" id="RHEA:21760"/>
        <dbReference type="ChEBI" id="CHEBI:57315"/>
        <dbReference type="ChEBI" id="CHEBI:57316"/>
        <dbReference type="EC" id="5.1.2.3"/>
    </reaction>
</comment>
<comment type="catalytic activity">
    <reaction evidence="5">
        <text>a (3S)-3-hydroxyacyl-CoA + NAD(+) = a 3-oxoacyl-CoA + NADH + H(+)</text>
        <dbReference type="Rhea" id="RHEA:22432"/>
        <dbReference type="ChEBI" id="CHEBI:15378"/>
        <dbReference type="ChEBI" id="CHEBI:57318"/>
        <dbReference type="ChEBI" id="CHEBI:57540"/>
        <dbReference type="ChEBI" id="CHEBI:57945"/>
        <dbReference type="ChEBI" id="CHEBI:90726"/>
        <dbReference type="EC" id="1.1.1.35"/>
    </reaction>
</comment>
<comment type="catalytic activity">
    <reaction evidence="5">
        <text>(3S)-3-hydroxybutanoyl-CoA + NAD(+) = acetoacetyl-CoA + NADH + H(+)</text>
        <dbReference type="Rhea" id="RHEA:30799"/>
        <dbReference type="ChEBI" id="CHEBI:15378"/>
        <dbReference type="ChEBI" id="CHEBI:57286"/>
        <dbReference type="ChEBI" id="CHEBI:57316"/>
        <dbReference type="ChEBI" id="CHEBI:57540"/>
        <dbReference type="ChEBI" id="CHEBI:57945"/>
    </reaction>
    <physiologicalReaction direction="left-to-right" evidence="5">
        <dbReference type="Rhea" id="RHEA:30800"/>
    </physiologicalReaction>
</comment>
<comment type="catalytic activity">
    <reaction evidence="5">
        <text>(3S)-hydroxyhexanoyl-CoA + NAD(+) = 3-oxohexanoyl-CoA + NADH + H(+)</text>
        <dbReference type="Rhea" id="RHEA:31143"/>
        <dbReference type="ChEBI" id="CHEBI:15378"/>
        <dbReference type="ChEBI" id="CHEBI:57540"/>
        <dbReference type="ChEBI" id="CHEBI:57945"/>
        <dbReference type="ChEBI" id="CHEBI:62075"/>
        <dbReference type="ChEBI" id="CHEBI:62418"/>
    </reaction>
    <physiologicalReaction direction="left-to-right" evidence="5">
        <dbReference type="Rhea" id="RHEA:31144"/>
    </physiologicalReaction>
</comment>
<comment type="catalytic activity">
    <reaction evidence="5">
        <text>(3S)-hydroxyoctanoyl-CoA + NAD(+) = 3-oxooctanoyl-CoA + NADH + H(+)</text>
        <dbReference type="Rhea" id="RHEA:31195"/>
        <dbReference type="ChEBI" id="CHEBI:15378"/>
        <dbReference type="ChEBI" id="CHEBI:57540"/>
        <dbReference type="ChEBI" id="CHEBI:57945"/>
        <dbReference type="ChEBI" id="CHEBI:62617"/>
        <dbReference type="ChEBI" id="CHEBI:62619"/>
    </reaction>
    <physiologicalReaction direction="left-to-right" evidence="5">
        <dbReference type="Rhea" id="RHEA:31196"/>
    </physiologicalReaction>
</comment>
<comment type="catalytic activity">
    <reaction evidence="5">
        <text>(3S)-3-hydroxydodecanoyl-CoA + NAD(+) = 3-oxododecanoyl-CoA + NADH + H(+)</text>
        <dbReference type="Rhea" id="RHEA:31179"/>
        <dbReference type="ChEBI" id="CHEBI:15378"/>
        <dbReference type="ChEBI" id="CHEBI:57540"/>
        <dbReference type="ChEBI" id="CHEBI:57945"/>
        <dbReference type="ChEBI" id="CHEBI:62558"/>
        <dbReference type="ChEBI" id="CHEBI:62615"/>
    </reaction>
    <physiologicalReaction direction="left-to-right" evidence="5">
        <dbReference type="Rhea" id="RHEA:31180"/>
    </physiologicalReaction>
</comment>
<comment type="catalytic activity">
    <reaction evidence="5">
        <text>(3S)-hydroxytetradecanoyl-CoA + NAD(+) = 3-oxotetradecanoyl-CoA + NADH + H(+)</text>
        <dbReference type="Rhea" id="RHEA:31167"/>
        <dbReference type="ChEBI" id="CHEBI:15378"/>
        <dbReference type="ChEBI" id="CHEBI:57540"/>
        <dbReference type="ChEBI" id="CHEBI:57945"/>
        <dbReference type="ChEBI" id="CHEBI:62543"/>
        <dbReference type="ChEBI" id="CHEBI:62614"/>
    </reaction>
    <physiologicalReaction direction="left-to-right" evidence="5">
        <dbReference type="Rhea" id="RHEA:31168"/>
    </physiologicalReaction>
</comment>
<comment type="biophysicochemical properties">
    <kinetics>
        <KM evidence="3">115 uM for crotonyl-CoA</KM>
    </kinetics>
</comment>
<comment type="pathway">
    <text evidence="8">Lipid metabolism; fatty acid beta-oxidation.</text>
</comment>
<comment type="subcellular location">
    <subcellularLocation>
        <location evidence="8">Peroxisome</location>
    </subcellularLocation>
</comment>
<comment type="tissue specificity">
    <text evidence="3">Widely expressed.</text>
</comment>
<comment type="domain">
    <text evidence="1">The epimerase and isomerase activities are contained in the N-terminal region while the dehydrogenase activity is in the C-terminal region.</text>
</comment>
<comment type="disruption phenotype">
    <text evidence="3">Reduced rosette size, twisted leaves, and abnormal and sterile flowers.</text>
</comment>
<comment type="similarity">
    <text evidence="8">In the N-terminal section; belongs to the enoyl-CoA hydratase/isomerase family.</text>
</comment>
<comment type="similarity">
    <text evidence="8">In the central section; belongs to the 3-hydroxyacyl-CoA dehydrogenase family.</text>
</comment>